<comment type="function">
    <text>This molybdenum-iron protein is part of the nitrogenase complex that catalyzes the key enzymatic reactions in nitrogen fixation.</text>
</comment>
<comment type="catalytic activity">
    <reaction>
        <text>N2 + 8 reduced [2Fe-2S]-[ferredoxin] + 16 ATP + 16 H2O = H2 + 8 oxidized [2Fe-2S]-[ferredoxin] + 2 NH4(+) + 16 ADP + 16 phosphate + 6 H(+)</text>
        <dbReference type="Rhea" id="RHEA:21448"/>
        <dbReference type="Rhea" id="RHEA-COMP:10000"/>
        <dbReference type="Rhea" id="RHEA-COMP:10001"/>
        <dbReference type="ChEBI" id="CHEBI:15377"/>
        <dbReference type="ChEBI" id="CHEBI:15378"/>
        <dbReference type="ChEBI" id="CHEBI:17997"/>
        <dbReference type="ChEBI" id="CHEBI:18276"/>
        <dbReference type="ChEBI" id="CHEBI:28938"/>
        <dbReference type="ChEBI" id="CHEBI:30616"/>
        <dbReference type="ChEBI" id="CHEBI:33737"/>
        <dbReference type="ChEBI" id="CHEBI:33738"/>
        <dbReference type="ChEBI" id="CHEBI:43474"/>
        <dbReference type="ChEBI" id="CHEBI:456216"/>
        <dbReference type="EC" id="1.18.6.1"/>
    </reaction>
</comment>
<comment type="cofactor">
    <cofactor evidence="1">
        <name>[8Fe-7S] cluster</name>
        <dbReference type="ChEBI" id="CHEBI:21143"/>
    </cofactor>
    <text evidence="1">Binds 1 [8Fe-7S] cluster per heterodimer.</text>
</comment>
<comment type="cofactor">
    <cofactor evidence="1">
        <name>[7Fe-Mo-9S-C-homocitryl] cluster</name>
        <dbReference type="ChEBI" id="CHEBI:30409"/>
    </cofactor>
    <text evidence="1">Binds 1 [7Fe-Mo-9S-C-homocitryl] cluster per subunit.</text>
</comment>
<comment type="subunit">
    <text>Tetramer of two alpha and two beta chains. Forms complex with the iron protein (nitrogenase component 2).</text>
</comment>
<comment type="similarity">
    <text evidence="2">Belongs to the NifD/NifK/NifE/NifN family.</text>
</comment>
<organism>
    <name type="scientific">Methanothermobacter thermautotrophicus (strain ATCC 29096 / DSM 1053 / JCM 10044 / NBRC 100330 / Delta H)</name>
    <name type="common">Methanobacterium thermoautotrophicum</name>
    <dbReference type="NCBI Taxonomy" id="187420"/>
    <lineage>
        <taxon>Archaea</taxon>
        <taxon>Methanobacteriati</taxon>
        <taxon>Methanobacteriota</taxon>
        <taxon>Methanomada group</taxon>
        <taxon>Methanobacteria</taxon>
        <taxon>Methanobacteriales</taxon>
        <taxon>Methanobacteriaceae</taxon>
        <taxon>Methanothermobacter</taxon>
    </lineage>
</organism>
<keyword id="KW-0067">ATP-binding</keyword>
<keyword id="KW-0408">Iron</keyword>
<keyword id="KW-0411">Iron-sulfur</keyword>
<keyword id="KW-0479">Metal-binding</keyword>
<keyword id="KW-0500">Molybdenum</keyword>
<keyword id="KW-0535">Nitrogen fixation</keyword>
<keyword id="KW-0547">Nucleotide-binding</keyword>
<keyword id="KW-0560">Oxidoreductase</keyword>
<keyword id="KW-1185">Reference proteome</keyword>
<accession>O27605</accession>
<gene>
    <name type="primary">nifD</name>
    <name type="ordered locus">MTH_1563</name>
</gene>
<reference key="1">
    <citation type="journal article" date="1997" name="J. Bacteriol.">
        <title>Complete genome sequence of Methanobacterium thermoautotrophicum deltaH: functional analysis and comparative genomics.</title>
        <authorList>
            <person name="Smith D.R."/>
            <person name="Doucette-Stamm L.A."/>
            <person name="Deloughery C."/>
            <person name="Lee H.-M."/>
            <person name="Dubois J."/>
            <person name="Aldredge T."/>
            <person name="Bashirzadeh R."/>
            <person name="Blakely D."/>
            <person name="Cook R."/>
            <person name="Gilbert K."/>
            <person name="Harrison D."/>
            <person name="Hoang L."/>
            <person name="Keagle P."/>
            <person name="Lumm W."/>
            <person name="Pothier B."/>
            <person name="Qiu D."/>
            <person name="Spadafora R."/>
            <person name="Vicare R."/>
            <person name="Wang Y."/>
            <person name="Wierzbowski J."/>
            <person name="Gibson R."/>
            <person name="Jiwani N."/>
            <person name="Caruso A."/>
            <person name="Bush D."/>
            <person name="Safer H."/>
            <person name="Patwell D."/>
            <person name="Prabhakar S."/>
            <person name="McDougall S."/>
            <person name="Shimer G."/>
            <person name="Goyal A."/>
            <person name="Pietrovski S."/>
            <person name="Church G.M."/>
            <person name="Daniels C.J."/>
            <person name="Mao J.-I."/>
            <person name="Rice P."/>
            <person name="Noelling J."/>
            <person name="Reeve J.N."/>
        </authorList>
    </citation>
    <scope>NUCLEOTIDE SEQUENCE [LARGE SCALE GENOMIC DNA]</scope>
    <source>
        <strain>ATCC 29096 / DSM 1053 / JCM 10044 / NBRC 100330 / Delta H</strain>
    </source>
</reference>
<sequence>MPFKLFDVDAEIPERKKHVYIKKKEDPEEDLPLCNTKTIPGCMTERGCAFAGAKGVITGAIKDALHVIHSPVGCTAYGYGTKRYPTSQEMPDGSLFPIENFNLKYITGTNLTETDVVFGGMDKLKRCIIEAAKEFPEANAVYTYATCTTGLIGDDIEAVSREVSEEIGKDVVAINAPGFAGPTQSKGHQVANYTLFENLVGTAEPPVVTDYDVNLIGEYNIDGDLWVLKRYFEEMGINVLSTFTGDCCHDEIKWMHRAKLSLVRCQRSATYIARLLEERYNVPYMKVDFFGIEYCKRNLMATGEYFGIPERAEEVIKDRMEKIGPEIEYLRNKLAGKKVWVFSGGPKNWHLPRPLEDELGMEVVAVSTMFEHEDGYEKIKKRVGENTVIVDDPNSLELEEIIEKYRPDIILSGIKEKYLAHKLGVPCVLIHSYENGPYIGFEGFLNLARDMYASIYSPVWDLLEFEAGD</sequence>
<evidence type="ECO:0000250" key="1"/>
<evidence type="ECO:0000305" key="2"/>
<name>NIFD_METTH</name>
<dbReference type="EC" id="1.18.6.1"/>
<dbReference type="EMBL" id="AE000666">
    <property type="protein sequence ID" value="AAB86037.1"/>
    <property type="molecule type" value="Genomic_DNA"/>
</dbReference>
<dbReference type="PIR" id="F69075">
    <property type="entry name" value="F69075"/>
</dbReference>
<dbReference type="RefSeq" id="WP_010877172.1">
    <property type="nucleotide sequence ID" value="NC_000916.1"/>
</dbReference>
<dbReference type="SMR" id="O27605"/>
<dbReference type="STRING" id="187420.MTH_1563"/>
<dbReference type="PaxDb" id="187420-MTH_1563"/>
<dbReference type="EnsemblBacteria" id="AAB86037">
    <property type="protein sequence ID" value="AAB86037"/>
    <property type="gene ID" value="MTH_1563"/>
</dbReference>
<dbReference type="GeneID" id="1471832"/>
<dbReference type="KEGG" id="mth:MTH_1563"/>
<dbReference type="PATRIC" id="fig|187420.15.peg.1526"/>
<dbReference type="HOGENOM" id="CLU_025876_1_0_2"/>
<dbReference type="InParanoid" id="O27605"/>
<dbReference type="Proteomes" id="UP000005223">
    <property type="component" value="Chromosome"/>
</dbReference>
<dbReference type="GO" id="GO:0005524">
    <property type="term" value="F:ATP binding"/>
    <property type="evidence" value="ECO:0007669"/>
    <property type="project" value="UniProtKB-KW"/>
</dbReference>
<dbReference type="GO" id="GO:0051536">
    <property type="term" value="F:iron-sulfur cluster binding"/>
    <property type="evidence" value="ECO:0007669"/>
    <property type="project" value="UniProtKB-KW"/>
</dbReference>
<dbReference type="GO" id="GO:0046872">
    <property type="term" value="F:metal ion binding"/>
    <property type="evidence" value="ECO:0007669"/>
    <property type="project" value="UniProtKB-KW"/>
</dbReference>
<dbReference type="GO" id="GO:0016163">
    <property type="term" value="F:nitrogenase activity"/>
    <property type="evidence" value="ECO:0007669"/>
    <property type="project" value="UniProtKB-EC"/>
</dbReference>
<dbReference type="GO" id="GO:0009399">
    <property type="term" value="P:nitrogen fixation"/>
    <property type="evidence" value="ECO:0007669"/>
    <property type="project" value="UniProtKB-KW"/>
</dbReference>
<dbReference type="CDD" id="cd01977">
    <property type="entry name" value="Nitrogenase_VFe_alpha"/>
    <property type="match status" value="1"/>
</dbReference>
<dbReference type="Gene3D" id="3.40.50.12380">
    <property type="entry name" value="Nitrogenase MoFe cofactor biosynthesis protein NifE, C-terminal"/>
    <property type="match status" value="1"/>
</dbReference>
<dbReference type="Gene3D" id="3.40.50.1980">
    <property type="entry name" value="Nitrogenase molybdenum iron protein domain"/>
    <property type="match status" value="1"/>
</dbReference>
<dbReference type="InterPro" id="IPR000510">
    <property type="entry name" value="Nase/OxRdtase_comp1"/>
</dbReference>
<dbReference type="InterPro" id="IPR005974">
    <property type="entry name" value="Nase_asu"/>
</dbReference>
<dbReference type="InterPro" id="IPR010143">
    <property type="entry name" value="Nase_comp1_asu"/>
</dbReference>
<dbReference type="InterPro" id="IPR000318">
    <property type="entry name" value="Nase_comp1_CS"/>
</dbReference>
<dbReference type="NCBIfam" id="TIGR01284">
    <property type="entry name" value="alt_nitrog_alph"/>
    <property type="match status" value="1"/>
</dbReference>
<dbReference type="NCBIfam" id="TIGR01862">
    <property type="entry name" value="N2-ase-Ialpha"/>
    <property type="match status" value="1"/>
</dbReference>
<dbReference type="PANTHER" id="PTHR43457">
    <property type="entry name" value="NITROGENASE MOLYBDENUM-IRON PROTEIN ALPHA CHAIN"/>
    <property type="match status" value="1"/>
</dbReference>
<dbReference type="PANTHER" id="PTHR43457:SF1">
    <property type="entry name" value="NITROGENASE MOLYBDENUM-IRON PROTEIN ALPHA CHAIN"/>
    <property type="match status" value="1"/>
</dbReference>
<dbReference type="Pfam" id="PF00148">
    <property type="entry name" value="Oxidored_nitro"/>
    <property type="match status" value="1"/>
</dbReference>
<dbReference type="SUPFAM" id="SSF53807">
    <property type="entry name" value="Helical backbone' metal receptor"/>
    <property type="match status" value="1"/>
</dbReference>
<dbReference type="PROSITE" id="PS00090">
    <property type="entry name" value="NITROGENASE_1_2"/>
    <property type="match status" value="1"/>
</dbReference>
<proteinExistence type="inferred from homology"/>
<protein>
    <recommendedName>
        <fullName>Nitrogenase molybdenum-iron protein alpha chain</fullName>
        <ecNumber>1.18.6.1</ecNumber>
    </recommendedName>
    <alternativeName>
        <fullName>Dinitrogenase</fullName>
    </alternativeName>
    <alternativeName>
        <fullName>Nitrogenase component I</fullName>
    </alternativeName>
</protein>
<feature type="chain" id="PRO_0000153073" description="Nitrogenase molybdenum-iron protein alpha chain">
    <location>
        <begin position="1"/>
        <end position="469"/>
    </location>
</feature>
<feature type="binding site" evidence="1">
    <location>
        <position position="48"/>
    </location>
    <ligand>
        <name>[8Fe-7S] cluster</name>
        <dbReference type="ChEBI" id="CHEBI:21143"/>
        <note>ligand shared with beta chain</note>
    </ligand>
</feature>
<feature type="binding site" evidence="1">
    <location>
        <position position="74"/>
    </location>
    <ligand>
        <name>[8Fe-7S] cluster</name>
        <dbReference type="ChEBI" id="CHEBI:21143"/>
        <note>ligand shared with beta chain</note>
    </ligand>
</feature>
<feature type="binding site" evidence="1">
    <location>
        <position position="147"/>
    </location>
    <ligand>
        <name>[8Fe-7S] cluster</name>
        <dbReference type="ChEBI" id="CHEBI:21143"/>
        <note>ligand shared with beta chain</note>
    </ligand>
</feature>
<feature type="binding site" evidence="1">
    <location>
        <position position="265"/>
    </location>
    <ligand>
        <name>[7Fe-Mo-9S-C-homocitryl] cluster</name>
        <dbReference type="ChEBI" id="CHEBI:30409"/>
    </ligand>
</feature>
<feature type="binding site" evidence="1">
    <location>
        <position position="431"/>
    </location>
    <ligand>
        <name>[7Fe-Mo-9S-C-homocitryl] cluster</name>
        <dbReference type="ChEBI" id="CHEBI:30409"/>
    </ligand>
</feature>